<feature type="chain" id="PRO_1000083021" description="Co-chaperone protein HscB homolog">
    <location>
        <begin position="1"/>
        <end position="173"/>
    </location>
</feature>
<feature type="domain" description="J" evidence="1">
    <location>
        <begin position="5"/>
        <end position="77"/>
    </location>
</feature>
<proteinExistence type="inferred from homology"/>
<keyword id="KW-0143">Chaperone</keyword>
<comment type="function">
    <text evidence="1">Co-chaperone involved in the maturation of iron-sulfur cluster-containing proteins. Seems to help targeting proteins to be folded toward HscA.</text>
</comment>
<comment type="subunit">
    <text evidence="1">Interacts with HscA and stimulates its ATPase activity.</text>
</comment>
<comment type="similarity">
    <text evidence="1">Belongs to the HscB family.</text>
</comment>
<name>HSCB_PSEP1</name>
<protein>
    <recommendedName>
        <fullName evidence="1">Co-chaperone protein HscB homolog</fullName>
    </recommendedName>
</protein>
<sequence length="173" mass="20202">MGTPCHYALFDLQPSFRLDLDKLATRYRELAREVHPDRFADASEREQRVALEKSAALNDAYQTLRSAPRRARYLLAISGHEVPQEVTVHDPDFLLQQMQWREELEELQDEADLDGVGVFKKRLKAAQDTLNEDFAGCWDAPGERDKAERLMRRMQFLDKLAQEVRQLEERLDD</sequence>
<accession>A5VYS7</accession>
<evidence type="ECO:0000255" key="1">
    <source>
        <dbReference type="HAMAP-Rule" id="MF_00682"/>
    </source>
</evidence>
<organism>
    <name type="scientific">Pseudomonas putida (strain ATCC 700007 / DSM 6899 / JCM 31910 / BCRC 17059 / LMG 24140 / F1)</name>
    <dbReference type="NCBI Taxonomy" id="351746"/>
    <lineage>
        <taxon>Bacteria</taxon>
        <taxon>Pseudomonadati</taxon>
        <taxon>Pseudomonadota</taxon>
        <taxon>Gammaproteobacteria</taxon>
        <taxon>Pseudomonadales</taxon>
        <taxon>Pseudomonadaceae</taxon>
        <taxon>Pseudomonas</taxon>
    </lineage>
</organism>
<gene>
    <name evidence="1" type="primary">hscB</name>
    <name type="ordered locus">Pput_0875</name>
</gene>
<dbReference type="EMBL" id="CP000712">
    <property type="protein sequence ID" value="ABQ77037.1"/>
    <property type="molecule type" value="Genomic_DNA"/>
</dbReference>
<dbReference type="SMR" id="A5VYS7"/>
<dbReference type="KEGG" id="ppf:Pput_0875"/>
<dbReference type="eggNOG" id="COG1076">
    <property type="taxonomic scope" value="Bacteria"/>
</dbReference>
<dbReference type="HOGENOM" id="CLU_068529_2_0_6"/>
<dbReference type="GO" id="GO:1990230">
    <property type="term" value="C:iron-sulfur cluster transfer complex"/>
    <property type="evidence" value="ECO:0007669"/>
    <property type="project" value="TreeGrafter"/>
</dbReference>
<dbReference type="GO" id="GO:0001671">
    <property type="term" value="F:ATPase activator activity"/>
    <property type="evidence" value="ECO:0007669"/>
    <property type="project" value="InterPro"/>
</dbReference>
<dbReference type="GO" id="GO:0051087">
    <property type="term" value="F:protein-folding chaperone binding"/>
    <property type="evidence" value="ECO:0007669"/>
    <property type="project" value="InterPro"/>
</dbReference>
<dbReference type="GO" id="GO:0044571">
    <property type="term" value="P:[2Fe-2S] cluster assembly"/>
    <property type="evidence" value="ECO:0007669"/>
    <property type="project" value="InterPro"/>
</dbReference>
<dbReference type="GO" id="GO:0051259">
    <property type="term" value="P:protein complex oligomerization"/>
    <property type="evidence" value="ECO:0007669"/>
    <property type="project" value="InterPro"/>
</dbReference>
<dbReference type="GO" id="GO:0006457">
    <property type="term" value="P:protein folding"/>
    <property type="evidence" value="ECO:0007669"/>
    <property type="project" value="UniProtKB-UniRule"/>
</dbReference>
<dbReference type="CDD" id="cd06257">
    <property type="entry name" value="DnaJ"/>
    <property type="match status" value="1"/>
</dbReference>
<dbReference type="Gene3D" id="1.10.287.110">
    <property type="entry name" value="DnaJ domain"/>
    <property type="match status" value="1"/>
</dbReference>
<dbReference type="Gene3D" id="1.20.1280.20">
    <property type="entry name" value="HscB, C-terminal domain"/>
    <property type="match status" value="1"/>
</dbReference>
<dbReference type="HAMAP" id="MF_00682">
    <property type="entry name" value="HscB"/>
    <property type="match status" value="1"/>
</dbReference>
<dbReference type="InterPro" id="IPR001623">
    <property type="entry name" value="DnaJ_domain"/>
</dbReference>
<dbReference type="InterPro" id="IPR004640">
    <property type="entry name" value="HscB"/>
</dbReference>
<dbReference type="InterPro" id="IPR036386">
    <property type="entry name" value="HscB_C_sf"/>
</dbReference>
<dbReference type="InterPro" id="IPR009073">
    <property type="entry name" value="HscB_oligo_C"/>
</dbReference>
<dbReference type="InterPro" id="IPR036869">
    <property type="entry name" value="J_dom_sf"/>
</dbReference>
<dbReference type="NCBIfam" id="TIGR00714">
    <property type="entry name" value="hscB"/>
    <property type="match status" value="1"/>
</dbReference>
<dbReference type="NCBIfam" id="NF001420">
    <property type="entry name" value="PRK00294.1"/>
    <property type="match status" value="1"/>
</dbReference>
<dbReference type="PANTHER" id="PTHR14021">
    <property type="entry name" value="IRON-SULFUR CLUSTER CO-CHAPERONE PROTEIN HSCB"/>
    <property type="match status" value="1"/>
</dbReference>
<dbReference type="PANTHER" id="PTHR14021:SF15">
    <property type="entry name" value="IRON-SULFUR CLUSTER CO-CHAPERONE PROTEIN HSCB"/>
    <property type="match status" value="1"/>
</dbReference>
<dbReference type="Pfam" id="PF00226">
    <property type="entry name" value="DnaJ"/>
    <property type="match status" value="1"/>
</dbReference>
<dbReference type="Pfam" id="PF07743">
    <property type="entry name" value="HSCB_C"/>
    <property type="match status" value="1"/>
</dbReference>
<dbReference type="SMART" id="SM00271">
    <property type="entry name" value="DnaJ"/>
    <property type="match status" value="1"/>
</dbReference>
<dbReference type="SUPFAM" id="SSF46565">
    <property type="entry name" value="Chaperone J-domain"/>
    <property type="match status" value="1"/>
</dbReference>
<dbReference type="SUPFAM" id="SSF47144">
    <property type="entry name" value="HSC20 (HSCB), C-terminal oligomerisation domain"/>
    <property type="match status" value="1"/>
</dbReference>
<dbReference type="PROSITE" id="PS50076">
    <property type="entry name" value="DNAJ_2"/>
    <property type="match status" value="1"/>
</dbReference>
<reference key="1">
    <citation type="submission" date="2007-05" db="EMBL/GenBank/DDBJ databases">
        <title>Complete sequence of Pseudomonas putida F1.</title>
        <authorList>
            <consortium name="US DOE Joint Genome Institute"/>
            <person name="Copeland A."/>
            <person name="Lucas S."/>
            <person name="Lapidus A."/>
            <person name="Barry K."/>
            <person name="Detter J.C."/>
            <person name="Glavina del Rio T."/>
            <person name="Hammon N."/>
            <person name="Israni S."/>
            <person name="Dalin E."/>
            <person name="Tice H."/>
            <person name="Pitluck S."/>
            <person name="Chain P."/>
            <person name="Malfatti S."/>
            <person name="Shin M."/>
            <person name="Vergez L."/>
            <person name="Schmutz J."/>
            <person name="Larimer F."/>
            <person name="Land M."/>
            <person name="Hauser L."/>
            <person name="Kyrpides N."/>
            <person name="Lykidis A."/>
            <person name="Parales R."/>
            <person name="Richardson P."/>
        </authorList>
    </citation>
    <scope>NUCLEOTIDE SEQUENCE [LARGE SCALE GENOMIC DNA]</scope>
    <source>
        <strain>ATCC 700007 / DSM 6899 / JCM 31910 / BCRC 17059 / LMG 24140 / F1</strain>
    </source>
</reference>